<comment type="function">
    <text evidence="1">Peptidoglycan polymerase that catalyzes glycan chain elongation from lipid-linked precursors.</text>
</comment>
<comment type="catalytic activity">
    <reaction evidence="1">
        <text>[GlcNAc-(1-&gt;4)-Mur2Ac(oyl-L-Ala-gamma-D-Glu-L-Lys-D-Ala-D-Ala)](n)-di-trans,octa-cis-undecaprenyl diphosphate + beta-D-GlcNAc-(1-&gt;4)-Mur2Ac(oyl-L-Ala-gamma-D-Glu-L-Lys-D-Ala-D-Ala)-di-trans,octa-cis-undecaprenyl diphosphate = [GlcNAc-(1-&gt;4)-Mur2Ac(oyl-L-Ala-gamma-D-Glu-L-Lys-D-Ala-D-Ala)](n+1)-di-trans,octa-cis-undecaprenyl diphosphate + di-trans,octa-cis-undecaprenyl diphosphate + H(+)</text>
        <dbReference type="Rhea" id="RHEA:23708"/>
        <dbReference type="Rhea" id="RHEA-COMP:9602"/>
        <dbReference type="Rhea" id="RHEA-COMP:9603"/>
        <dbReference type="ChEBI" id="CHEBI:15378"/>
        <dbReference type="ChEBI" id="CHEBI:58405"/>
        <dbReference type="ChEBI" id="CHEBI:60033"/>
        <dbReference type="ChEBI" id="CHEBI:78435"/>
        <dbReference type="EC" id="2.4.99.28"/>
    </reaction>
</comment>
<comment type="pathway">
    <text evidence="1">Cell wall biogenesis; peptidoglycan biosynthesis.</text>
</comment>
<comment type="subcellular location">
    <subcellularLocation>
        <location evidence="1">Cell inner membrane</location>
        <topology evidence="1">Single-pass membrane protein</topology>
    </subcellularLocation>
</comment>
<comment type="similarity">
    <text evidence="1">Belongs to the glycosyltransferase 51 family.</text>
</comment>
<accession>Q3SFZ8</accession>
<sequence>MRTLWRWLGKGVAAAVALVLLYQLWIFAHVLWWIDHDPRSTAFMETGLARQQAKNRDAVLRHKWVPYDRISNNLKRAVVAAEDARFVEHAGFDVAGIQKAFQKNVKKGRLVAGGSTITQQLAKNLFLSGERSFLRKGQEVVITLMIESTWSKRRILEVYLNVIEWGNGIYGAEAASRRYYKKSAATLSRDQAARMAAMIPNPRWYENHRGSRLYQRRVVLIKRYMGSVAVPR</sequence>
<gene>
    <name evidence="1" type="primary">mtgA</name>
    <name type="ordered locus">Tbd_2505</name>
</gene>
<name>MTGA_THIDA</name>
<proteinExistence type="inferred from homology"/>
<evidence type="ECO:0000255" key="1">
    <source>
        <dbReference type="HAMAP-Rule" id="MF_00766"/>
    </source>
</evidence>
<reference key="1">
    <citation type="journal article" date="2006" name="J. Bacteriol.">
        <title>The genome sequence of the obligately chemolithoautotrophic, facultatively anaerobic bacterium Thiobacillus denitrificans.</title>
        <authorList>
            <person name="Beller H.R."/>
            <person name="Chain P.S."/>
            <person name="Letain T.E."/>
            <person name="Chakicherla A."/>
            <person name="Larimer F.W."/>
            <person name="Richardson P.M."/>
            <person name="Coleman M.A."/>
            <person name="Wood A.P."/>
            <person name="Kelly D.P."/>
        </authorList>
    </citation>
    <scope>NUCLEOTIDE SEQUENCE [LARGE SCALE GENOMIC DNA]</scope>
    <source>
        <strain>ATCC 25259 / T1</strain>
    </source>
</reference>
<feature type="chain" id="PRO_0000257695" description="Biosynthetic peptidoglycan transglycosylase">
    <location>
        <begin position="1"/>
        <end position="232"/>
    </location>
</feature>
<feature type="transmembrane region" description="Helical" evidence="1">
    <location>
        <begin position="14"/>
        <end position="34"/>
    </location>
</feature>
<keyword id="KW-0997">Cell inner membrane</keyword>
<keyword id="KW-1003">Cell membrane</keyword>
<keyword id="KW-0133">Cell shape</keyword>
<keyword id="KW-0961">Cell wall biogenesis/degradation</keyword>
<keyword id="KW-0328">Glycosyltransferase</keyword>
<keyword id="KW-0472">Membrane</keyword>
<keyword id="KW-0573">Peptidoglycan synthesis</keyword>
<keyword id="KW-1185">Reference proteome</keyword>
<keyword id="KW-0808">Transferase</keyword>
<keyword id="KW-0812">Transmembrane</keyword>
<keyword id="KW-1133">Transmembrane helix</keyword>
<dbReference type="EC" id="2.4.99.28" evidence="1"/>
<dbReference type="EMBL" id="CP000116">
    <property type="protein sequence ID" value="AAZ98458.1"/>
    <property type="molecule type" value="Genomic_DNA"/>
</dbReference>
<dbReference type="RefSeq" id="WP_011313017.1">
    <property type="nucleotide sequence ID" value="NC_007404.1"/>
</dbReference>
<dbReference type="SMR" id="Q3SFZ8"/>
<dbReference type="STRING" id="292415.Tbd_2505"/>
<dbReference type="CAZy" id="GT51">
    <property type="family name" value="Glycosyltransferase Family 51"/>
</dbReference>
<dbReference type="KEGG" id="tbd:Tbd_2505"/>
<dbReference type="eggNOG" id="COG0744">
    <property type="taxonomic scope" value="Bacteria"/>
</dbReference>
<dbReference type="HOGENOM" id="CLU_006354_1_0_4"/>
<dbReference type="OrthoDB" id="9766909at2"/>
<dbReference type="UniPathway" id="UPA00219"/>
<dbReference type="Proteomes" id="UP000008291">
    <property type="component" value="Chromosome"/>
</dbReference>
<dbReference type="GO" id="GO:0009274">
    <property type="term" value="C:peptidoglycan-based cell wall"/>
    <property type="evidence" value="ECO:0007669"/>
    <property type="project" value="InterPro"/>
</dbReference>
<dbReference type="GO" id="GO:0005886">
    <property type="term" value="C:plasma membrane"/>
    <property type="evidence" value="ECO:0007669"/>
    <property type="project" value="UniProtKB-SubCell"/>
</dbReference>
<dbReference type="GO" id="GO:0016763">
    <property type="term" value="F:pentosyltransferase activity"/>
    <property type="evidence" value="ECO:0007669"/>
    <property type="project" value="InterPro"/>
</dbReference>
<dbReference type="GO" id="GO:0008955">
    <property type="term" value="F:peptidoglycan glycosyltransferase activity"/>
    <property type="evidence" value="ECO:0007669"/>
    <property type="project" value="UniProtKB-UniRule"/>
</dbReference>
<dbReference type="GO" id="GO:0071555">
    <property type="term" value="P:cell wall organization"/>
    <property type="evidence" value="ECO:0007669"/>
    <property type="project" value="UniProtKB-KW"/>
</dbReference>
<dbReference type="GO" id="GO:0009252">
    <property type="term" value="P:peptidoglycan biosynthetic process"/>
    <property type="evidence" value="ECO:0007669"/>
    <property type="project" value="UniProtKB-UniRule"/>
</dbReference>
<dbReference type="GO" id="GO:0008360">
    <property type="term" value="P:regulation of cell shape"/>
    <property type="evidence" value="ECO:0007669"/>
    <property type="project" value="UniProtKB-KW"/>
</dbReference>
<dbReference type="Gene3D" id="1.10.3810.10">
    <property type="entry name" value="Biosynthetic peptidoglycan transglycosylase-like"/>
    <property type="match status" value="1"/>
</dbReference>
<dbReference type="HAMAP" id="MF_00766">
    <property type="entry name" value="PGT_MtgA"/>
    <property type="match status" value="1"/>
</dbReference>
<dbReference type="InterPro" id="IPR001264">
    <property type="entry name" value="Glyco_trans_51"/>
</dbReference>
<dbReference type="InterPro" id="IPR023346">
    <property type="entry name" value="Lysozyme-like_dom_sf"/>
</dbReference>
<dbReference type="InterPro" id="IPR036950">
    <property type="entry name" value="PBP_transglycosylase"/>
</dbReference>
<dbReference type="InterPro" id="IPR011812">
    <property type="entry name" value="Pep_trsgly"/>
</dbReference>
<dbReference type="NCBIfam" id="TIGR02070">
    <property type="entry name" value="mono_pep_trsgly"/>
    <property type="match status" value="1"/>
</dbReference>
<dbReference type="PANTHER" id="PTHR30400:SF0">
    <property type="entry name" value="BIOSYNTHETIC PEPTIDOGLYCAN TRANSGLYCOSYLASE"/>
    <property type="match status" value="1"/>
</dbReference>
<dbReference type="PANTHER" id="PTHR30400">
    <property type="entry name" value="MONOFUNCTIONAL BIOSYNTHETIC PEPTIDOGLYCAN TRANSGLYCOSYLASE"/>
    <property type="match status" value="1"/>
</dbReference>
<dbReference type="Pfam" id="PF00912">
    <property type="entry name" value="Transgly"/>
    <property type="match status" value="1"/>
</dbReference>
<dbReference type="SUPFAM" id="SSF53955">
    <property type="entry name" value="Lysozyme-like"/>
    <property type="match status" value="1"/>
</dbReference>
<organism>
    <name type="scientific">Thiobacillus denitrificans (strain ATCC 25259 / T1)</name>
    <dbReference type="NCBI Taxonomy" id="292415"/>
    <lineage>
        <taxon>Bacteria</taxon>
        <taxon>Pseudomonadati</taxon>
        <taxon>Pseudomonadota</taxon>
        <taxon>Betaproteobacteria</taxon>
        <taxon>Nitrosomonadales</taxon>
        <taxon>Thiobacillaceae</taxon>
        <taxon>Thiobacillus</taxon>
    </lineage>
</organism>
<protein>
    <recommendedName>
        <fullName evidence="1">Biosynthetic peptidoglycan transglycosylase</fullName>
        <ecNumber evidence="1">2.4.99.28</ecNumber>
    </recommendedName>
    <alternativeName>
        <fullName evidence="1">Glycan polymerase</fullName>
    </alternativeName>
    <alternativeName>
        <fullName evidence="1">Peptidoglycan glycosyltransferase MtgA</fullName>
        <shortName evidence="1">PGT</shortName>
    </alternativeName>
</protein>